<dbReference type="EMBL" id="CP000720">
    <property type="protein sequence ID" value="ABS49082.1"/>
    <property type="molecule type" value="Genomic_DNA"/>
</dbReference>
<dbReference type="RefSeq" id="WP_002208665.1">
    <property type="nucleotide sequence ID" value="NC_009708.1"/>
</dbReference>
<dbReference type="SMR" id="A7FLE7"/>
<dbReference type="GeneID" id="96664444"/>
<dbReference type="KEGG" id="ypi:YpsIP31758_3115"/>
<dbReference type="HOGENOM" id="CLU_087843_4_1_6"/>
<dbReference type="Proteomes" id="UP000002412">
    <property type="component" value="Chromosome"/>
</dbReference>
<dbReference type="GO" id="GO:0005829">
    <property type="term" value="C:cytosol"/>
    <property type="evidence" value="ECO:0007669"/>
    <property type="project" value="TreeGrafter"/>
</dbReference>
<dbReference type="GO" id="GO:0003723">
    <property type="term" value="F:RNA binding"/>
    <property type="evidence" value="ECO:0007669"/>
    <property type="project" value="UniProtKB-UniRule"/>
</dbReference>
<dbReference type="GO" id="GO:0006353">
    <property type="term" value="P:DNA-templated transcription termination"/>
    <property type="evidence" value="ECO:0007669"/>
    <property type="project" value="UniProtKB-UniRule"/>
</dbReference>
<dbReference type="GO" id="GO:0031564">
    <property type="term" value="P:transcription antitermination"/>
    <property type="evidence" value="ECO:0007669"/>
    <property type="project" value="UniProtKB-KW"/>
</dbReference>
<dbReference type="CDD" id="cd00619">
    <property type="entry name" value="Terminator_NusB"/>
    <property type="match status" value="1"/>
</dbReference>
<dbReference type="FunFam" id="1.10.940.10:FF:000001">
    <property type="entry name" value="Transcription antitermination factor NusB"/>
    <property type="match status" value="1"/>
</dbReference>
<dbReference type="Gene3D" id="1.10.940.10">
    <property type="entry name" value="NusB-like"/>
    <property type="match status" value="1"/>
</dbReference>
<dbReference type="HAMAP" id="MF_00073">
    <property type="entry name" value="NusB"/>
    <property type="match status" value="1"/>
</dbReference>
<dbReference type="InterPro" id="IPR035926">
    <property type="entry name" value="NusB-like_sf"/>
</dbReference>
<dbReference type="InterPro" id="IPR011605">
    <property type="entry name" value="NusB_fam"/>
</dbReference>
<dbReference type="InterPro" id="IPR006027">
    <property type="entry name" value="NusB_RsmB_TIM44"/>
</dbReference>
<dbReference type="NCBIfam" id="TIGR01951">
    <property type="entry name" value="nusB"/>
    <property type="match status" value="1"/>
</dbReference>
<dbReference type="PANTHER" id="PTHR11078:SF3">
    <property type="entry name" value="ANTITERMINATION NUSB DOMAIN-CONTAINING PROTEIN"/>
    <property type="match status" value="1"/>
</dbReference>
<dbReference type="PANTHER" id="PTHR11078">
    <property type="entry name" value="N UTILIZATION SUBSTANCE PROTEIN B-RELATED"/>
    <property type="match status" value="1"/>
</dbReference>
<dbReference type="Pfam" id="PF01029">
    <property type="entry name" value="NusB"/>
    <property type="match status" value="1"/>
</dbReference>
<dbReference type="SUPFAM" id="SSF48013">
    <property type="entry name" value="NusB-like"/>
    <property type="match status" value="1"/>
</dbReference>
<comment type="function">
    <text evidence="1">Involved in transcription antitermination. Required for transcription of ribosomal RNA (rRNA) genes. Binds specifically to the boxA antiterminator sequence of the ribosomal RNA (rrn) operons.</text>
</comment>
<comment type="similarity">
    <text evidence="1">Belongs to the NusB family.</text>
</comment>
<protein>
    <recommendedName>
        <fullName evidence="1">Transcription antitermination protein NusB</fullName>
    </recommendedName>
    <alternativeName>
        <fullName evidence="1">Antitermination factor NusB</fullName>
    </alternativeName>
</protein>
<sequence length="138" mass="15506">MKPAARRRARECAVQALYSWQLSKNDIADVELQFLSEQDVKDVDIAYFRELLSGVAVNAASLDALMAPFLSRQLEELGQVERAVLRIALFELSKRDDVPYKVAINEAIELAKTFGAEDSHKFVNGVLDKVAPTVRKRK</sequence>
<accession>A7FLE7</accession>
<reference key="1">
    <citation type="journal article" date="2007" name="PLoS Genet.">
        <title>The complete genome sequence of Yersinia pseudotuberculosis IP31758, the causative agent of Far East scarlet-like fever.</title>
        <authorList>
            <person name="Eppinger M."/>
            <person name="Rosovitz M.J."/>
            <person name="Fricke W.F."/>
            <person name="Rasko D.A."/>
            <person name="Kokorina G."/>
            <person name="Fayolle C."/>
            <person name="Lindler L.E."/>
            <person name="Carniel E."/>
            <person name="Ravel J."/>
        </authorList>
    </citation>
    <scope>NUCLEOTIDE SEQUENCE [LARGE SCALE GENOMIC DNA]</scope>
    <source>
        <strain>IP 31758</strain>
    </source>
</reference>
<gene>
    <name evidence="1" type="primary">nusB</name>
    <name type="ordered locus">YpsIP31758_3115</name>
</gene>
<evidence type="ECO:0000255" key="1">
    <source>
        <dbReference type="HAMAP-Rule" id="MF_00073"/>
    </source>
</evidence>
<organism>
    <name type="scientific">Yersinia pseudotuberculosis serotype O:1b (strain IP 31758)</name>
    <dbReference type="NCBI Taxonomy" id="349747"/>
    <lineage>
        <taxon>Bacteria</taxon>
        <taxon>Pseudomonadati</taxon>
        <taxon>Pseudomonadota</taxon>
        <taxon>Gammaproteobacteria</taxon>
        <taxon>Enterobacterales</taxon>
        <taxon>Yersiniaceae</taxon>
        <taxon>Yersinia</taxon>
    </lineage>
</organism>
<keyword id="KW-0694">RNA-binding</keyword>
<keyword id="KW-0804">Transcription</keyword>
<keyword id="KW-0889">Transcription antitermination</keyword>
<keyword id="KW-0805">Transcription regulation</keyword>
<name>NUSB_YERP3</name>
<feature type="chain" id="PRO_1000057502" description="Transcription antitermination protein NusB">
    <location>
        <begin position="1"/>
        <end position="138"/>
    </location>
</feature>
<proteinExistence type="inferred from homology"/>